<evidence type="ECO:0000255" key="1">
    <source>
        <dbReference type="HAMAP-Rule" id="MF_00129"/>
    </source>
</evidence>
<accession>Q82S78</accession>
<organism>
    <name type="scientific">Nitrosomonas europaea (strain ATCC 19718 / CIP 103999 / KCTC 2705 / NBRC 14298)</name>
    <dbReference type="NCBI Taxonomy" id="228410"/>
    <lineage>
        <taxon>Bacteria</taxon>
        <taxon>Pseudomonadati</taxon>
        <taxon>Pseudomonadota</taxon>
        <taxon>Betaproteobacteria</taxon>
        <taxon>Nitrosomonadales</taxon>
        <taxon>Nitrosomonadaceae</taxon>
        <taxon>Nitrosomonas</taxon>
    </lineage>
</organism>
<feature type="chain" id="PRO_0000117142" description="tRNA uridine 5-carboxymethylaminomethyl modification enzyme MnmG">
    <location>
        <begin position="1"/>
        <end position="639"/>
    </location>
</feature>
<feature type="binding site" evidence="1">
    <location>
        <begin position="13"/>
        <end position="18"/>
    </location>
    <ligand>
        <name>FAD</name>
        <dbReference type="ChEBI" id="CHEBI:57692"/>
    </ligand>
</feature>
<feature type="binding site" evidence="1">
    <location>
        <position position="125"/>
    </location>
    <ligand>
        <name>FAD</name>
        <dbReference type="ChEBI" id="CHEBI:57692"/>
    </ligand>
</feature>
<feature type="binding site" evidence="1">
    <location>
        <position position="180"/>
    </location>
    <ligand>
        <name>FAD</name>
        <dbReference type="ChEBI" id="CHEBI:57692"/>
    </ligand>
</feature>
<feature type="binding site" evidence="1">
    <location>
        <begin position="273"/>
        <end position="287"/>
    </location>
    <ligand>
        <name>NAD(+)</name>
        <dbReference type="ChEBI" id="CHEBI:57540"/>
    </ligand>
</feature>
<feature type="binding site" evidence="1">
    <location>
        <position position="370"/>
    </location>
    <ligand>
        <name>FAD</name>
        <dbReference type="ChEBI" id="CHEBI:57692"/>
    </ligand>
</feature>
<sequence>MHFSKDFDIIVVGGGHAGTEAALAAARMGQKTLLLTQNLDTLGQMSCNPSIGGIGKGHLVKEIDALGGAMAAATDEAGIQFRILNSSKGPAVRATRAQADRVLYRQAIRRRLEAQPDLLLLQSTVDDLLLNGDKITGVVTHLGMTFSARAVVLTVGTFLGGVAHVGHQNFQAGRAGDPASIRLAHRLREMNLSVGRLKTGTPPRIDARTIDFRILREQPGDEPVPVFSFLGNITQHPRQISCWMTRTNERTHEIIRTGLDRSPLYTGKIEGIGPRYCPSIEDKVVRFSERDAHTIFLEPEGLETSEIYPNGISTSLPFDVQVELVRSIAGLENAHITRPGYAIEYDYFDPRTLKKSLETKVIDGLFFAGQINGTTGYEEAAAQGLLAGLNASLKIKEQEPWCPSRDEAYIGVLVDDLVTRGVTEPYRMFTSRAEFRLQLREDNADMRLTETGYRLGLVSEERWQAFAAKREAIETEKTRLRNTWISPGTLSKLQTPDQPADDRSYSLYDLLRRPEIGYAELVSLSARGQSVIDSQVAQQVEIDVKYEGYIERQRQEVVRHAQHEAMILPKDMDYRAVRGLSNEVTQKLNQHQPETIGQAARISGITPAAISLLLVHLKRGMARQAVKREEMHESGKTVA</sequence>
<dbReference type="EMBL" id="AL954747">
    <property type="protein sequence ID" value="CAD86388.1"/>
    <property type="molecule type" value="Genomic_DNA"/>
</dbReference>
<dbReference type="RefSeq" id="WP_011112938.1">
    <property type="nucleotide sequence ID" value="NC_004757.1"/>
</dbReference>
<dbReference type="SMR" id="Q82S78"/>
<dbReference type="STRING" id="228410.NE2476"/>
<dbReference type="GeneID" id="87105605"/>
<dbReference type="KEGG" id="neu:NE2476"/>
<dbReference type="eggNOG" id="COG0445">
    <property type="taxonomic scope" value="Bacteria"/>
</dbReference>
<dbReference type="HOGENOM" id="CLU_007831_2_2_4"/>
<dbReference type="OrthoDB" id="9815560at2"/>
<dbReference type="PhylomeDB" id="Q82S78"/>
<dbReference type="Proteomes" id="UP000001416">
    <property type="component" value="Chromosome"/>
</dbReference>
<dbReference type="GO" id="GO:0005829">
    <property type="term" value="C:cytosol"/>
    <property type="evidence" value="ECO:0007669"/>
    <property type="project" value="TreeGrafter"/>
</dbReference>
<dbReference type="GO" id="GO:0050660">
    <property type="term" value="F:flavin adenine dinucleotide binding"/>
    <property type="evidence" value="ECO:0007669"/>
    <property type="project" value="UniProtKB-UniRule"/>
</dbReference>
<dbReference type="GO" id="GO:0030488">
    <property type="term" value="P:tRNA methylation"/>
    <property type="evidence" value="ECO:0007669"/>
    <property type="project" value="TreeGrafter"/>
</dbReference>
<dbReference type="GO" id="GO:0002098">
    <property type="term" value="P:tRNA wobble uridine modification"/>
    <property type="evidence" value="ECO:0007669"/>
    <property type="project" value="InterPro"/>
</dbReference>
<dbReference type="FunFam" id="1.10.10.1800:FF:000001">
    <property type="entry name" value="tRNA uridine 5-carboxymethylaminomethyl modification enzyme MnmG"/>
    <property type="match status" value="1"/>
</dbReference>
<dbReference type="FunFam" id="1.10.150.570:FF:000001">
    <property type="entry name" value="tRNA uridine 5-carboxymethylaminomethyl modification enzyme MnmG"/>
    <property type="match status" value="1"/>
</dbReference>
<dbReference type="FunFam" id="3.50.50.60:FF:000002">
    <property type="entry name" value="tRNA uridine 5-carboxymethylaminomethyl modification enzyme MnmG"/>
    <property type="match status" value="1"/>
</dbReference>
<dbReference type="FunFam" id="3.50.50.60:FF:000010">
    <property type="entry name" value="tRNA uridine 5-carboxymethylaminomethyl modification enzyme MnmG"/>
    <property type="match status" value="1"/>
</dbReference>
<dbReference type="Gene3D" id="3.50.50.60">
    <property type="entry name" value="FAD/NAD(P)-binding domain"/>
    <property type="match status" value="2"/>
</dbReference>
<dbReference type="Gene3D" id="1.10.150.570">
    <property type="entry name" value="GidA associated domain, C-terminal subdomain"/>
    <property type="match status" value="1"/>
</dbReference>
<dbReference type="Gene3D" id="1.10.10.1800">
    <property type="entry name" value="tRNA uridine 5-carboxymethylaminomethyl modification enzyme MnmG/GidA"/>
    <property type="match status" value="1"/>
</dbReference>
<dbReference type="HAMAP" id="MF_00129">
    <property type="entry name" value="MnmG_GidA"/>
    <property type="match status" value="1"/>
</dbReference>
<dbReference type="InterPro" id="IPR036188">
    <property type="entry name" value="FAD/NAD-bd_sf"/>
</dbReference>
<dbReference type="InterPro" id="IPR049312">
    <property type="entry name" value="GIDA_C_N"/>
</dbReference>
<dbReference type="InterPro" id="IPR004416">
    <property type="entry name" value="MnmG"/>
</dbReference>
<dbReference type="InterPro" id="IPR002218">
    <property type="entry name" value="MnmG-rel"/>
</dbReference>
<dbReference type="InterPro" id="IPR020595">
    <property type="entry name" value="MnmG-rel_CS"/>
</dbReference>
<dbReference type="InterPro" id="IPR026904">
    <property type="entry name" value="MnmG_C"/>
</dbReference>
<dbReference type="InterPro" id="IPR047001">
    <property type="entry name" value="MnmG_C_subdom"/>
</dbReference>
<dbReference type="InterPro" id="IPR044920">
    <property type="entry name" value="MnmG_C_subdom_sf"/>
</dbReference>
<dbReference type="InterPro" id="IPR040131">
    <property type="entry name" value="MnmG_N"/>
</dbReference>
<dbReference type="NCBIfam" id="TIGR00136">
    <property type="entry name" value="mnmG_gidA"/>
    <property type="match status" value="1"/>
</dbReference>
<dbReference type="PANTHER" id="PTHR11806">
    <property type="entry name" value="GLUCOSE INHIBITED DIVISION PROTEIN A"/>
    <property type="match status" value="1"/>
</dbReference>
<dbReference type="PANTHER" id="PTHR11806:SF0">
    <property type="entry name" value="PROTEIN MTO1 HOMOLOG, MITOCHONDRIAL"/>
    <property type="match status" value="1"/>
</dbReference>
<dbReference type="Pfam" id="PF01134">
    <property type="entry name" value="GIDA"/>
    <property type="match status" value="1"/>
</dbReference>
<dbReference type="Pfam" id="PF21680">
    <property type="entry name" value="GIDA_C_1st"/>
    <property type="match status" value="1"/>
</dbReference>
<dbReference type="Pfam" id="PF13932">
    <property type="entry name" value="SAM_GIDA_C"/>
    <property type="match status" value="1"/>
</dbReference>
<dbReference type="SMART" id="SM01228">
    <property type="entry name" value="GIDA_assoc_3"/>
    <property type="match status" value="1"/>
</dbReference>
<dbReference type="SUPFAM" id="SSF51905">
    <property type="entry name" value="FAD/NAD(P)-binding domain"/>
    <property type="match status" value="1"/>
</dbReference>
<dbReference type="PROSITE" id="PS01280">
    <property type="entry name" value="GIDA_1"/>
    <property type="match status" value="1"/>
</dbReference>
<dbReference type="PROSITE" id="PS01281">
    <property type="entry name" value="GIDA_2"/>
    <property type="match status" value="1"/>
</dbReference>
<gene>
    <name evidence="1" type="primary">mnmG</name>
    <name evidence="1" type="synonym">gidA</name>
    <name type="ordered locus">NE2476</name>
</gene>
<keyword id="KW-0963">Cytoplasm</keyword>
<keyword id="KW-0274">FAD</keyword>
<keyword id="KW-0285">Flavoprotein</keyword>
<keyword id="KW-0520">NAD</keyword>
<keyword id="KW-1185">Reference proteome</keyword>
<keyword id="KW-0819">tRNA processing</keyword>
<reference key="1">
    <citation type="journal article" date="2003" name="J. Bacteriol.">
        <title>Complete genome sequence of the ammonia-oxidizing bacterium and obligate chemolithoautotroph Nitrosomonas europaea.</title>
        <authorList>
            <person name="Chain P."/>
            <person name="Lamerdin J.E."/>
            <person name="Larimer F.W."/>
            <person name="Regala W."/>
            <person name="Lao V."/>
            <person name="Land M.L."/>
            <person name="Hauser L."/>
            <person name="Hooper A.B."/>
            <person name="Klotz M.G."/>
            <person name="Norton J."/>
            <person name="Sayavedra-Soto L.A."/>
            <person name="Arciero D.M."/>
            <person name="Hommes N.G."/>
            <person name="Whittaker M.M."/>
            <person name="Arp D.J."/>
        </authorList>
    </citation>
    <scope>NUCLEOTIDE SEQUENCE [LARGE SCALE GENOMIC DNA]</scope>
    <source>
        <strain>ATCC 19718 / CIP 103999 / KCTC 2705 / NBRC 14298</strain>
    </source>
</reference>
<proteinExistence type="inferred from homology"/>
<protein>
    <recommendedName>
        <fullName evidence="1">tRNA uridine 5-carboxymethylaminomethyl modification enzyme MnmG</fullName>
    </recommendedName>
    <alternativeName>
        <fullName evidence="1">Glucose-inhibited division protein A</fullName>
    </alternativeName>
</protein>
<name>MNMG_NITEU</name>
<comment type="function">
    <text evidence="1">NAD-binding protein involved in the addition of a carboxymethylaminomethyl (cmnm) group at the wobble position (U34) of certain tRNAs, forming tRNA-cmnm(5)s(2)U34.</text>
</comment>
<comment type="cofactor">
    <cofactor evidence="1">
        <name>FAD</name>
        <dbReference type="ChEBI" id="CHEBI:57692"/>
    </cofactor>
</comment>
<comment type="subunit">
    <text evidence="1">Homodimer. Heterotetramer of two MnmE and two MnmG subunits.</text>
</comment>
<comment type="subcellular location">
    <subcellularLocation>
        <location evidence="1">Cytoplasm</location>
    </subcellularLocation>
</comment>
<comment type="similarity">
    <text evidence="1">Belongs to the MnmG family.</text>
</comment>